<gene>
    <name evidence="1" type="primary">rpsM</name>
    <name type="ordered locus">PSPA7_0859</name>
</gene>
<dbReference type="EMBL" id="CP000744">
    <property type="protein sequence ID" value="ABR85492.1"/>
    <property type="molecule type" value="Genomic_DNA"/>
</dbReference>
<dbReference type="RefSeq" id="WP_003152262.1">
    <property type="nucleotide sequence ID" value="NC_009656.1"/>
</dbReference>
<dbReference type="SMR" id="A6UZL0"/>
<dbReference type="GeneID" id="77219220"/>
<dbReference type="KEGG" id="pap:PSPA7_0859"/>
<dbReference type="HOGENOM" id="CLU_103849_1_2_6"/>
<dbReference type="Proteomes" id="UP000001582">
    <property type="component" value="Chromosome"/>
</dbReference>
<dbReference type="GO" id="GO:0005829">
    <property type="term" value="C:cytosol"/>
    <property type="evidence" value="ECO:0007669"/>
    <property type="project" value="TreeGrafter"/>
</dbReference>
<dbReference type="GO" id="GO:0015935">
    <property type="term" value="C:small ribosomal subunit"/>
    <property type="evidence" value="ECO:0007669"/>
    <property type="project" value="TreeGrafter"/>
</dbReference>
<dbReference type="GO" id="GO:0019843">
    <property type="term" value="F:rRNA binding"/>
    <property type="evidence" value="ECO:0007669"/>
    <property type="project" value="UniProtKB-UniRule"/>
</dbReference>
<dbReference type="GO" id="GO:0003735">
    <property type="term" value="F:structural constituent of ribosome"/>
    <property type="evidence" value="ECO:0007669"/>
    <property type="project" value="InterPro"/>
</dbReference>
<dbReference type="GO" id="GO:0000049">
    <property type="term" value="F:tRNA binding"/>
    <property type="evidence" value="ECO:0007669"/>
    <property type="project" value="UniProtKB-UniRule"/>
</dbReference>
<dbReference type="GO" id="GO:0006412">
    <property type="term" value="P:translation"/>
    <property type="evidence" value="ECO:0007669"/>
    <property type="project" value="UniProtKB-UniRule"/>
</dbReference>
<dbReference type="FunFam" id="1.10.8.50:FF:000001">
    <property type="entry name" value="30S ribosomal protein S13"/>
    <property type="match status" value="1"/>
</dbReference>
<dbReference type="FunFam" id="4.10.910.10:FF:000001">
    <property type="entry name" value="30S ribosomal protein S13"/>
    <property type="match status" value="1"/>
</dbReference>
<dbReference type="Gene3D" id="1.10.8.50">
    <property type="match status" value="1"/>
</dbReference>
<dbReference type="Gene3D" id="4.10.910.10">
    <property type="entry name" value="30s ribosomal protein s13, domain 2"/>
    <property type="match status" value="1"/>
</dbReference>
<dbReference type="HAMAP" id="MF_01315">
    <property type="entry name" value="Ribosomal_uS13"/>
    <property type="match status" value="1"/>
</dbReference>
<dbReference type="InterPro" id="IPR027437">
    <property type="entry name" value="Rbsml_uS13_C"/>
</dbReference>
<dbReference type="InterPro" id="IPR001892">
    <property type="entry name" value="Ribosomal_uS13"/>
</dbReference>
<dbReference type="InterPro" id="IPR010979">
    <property type="entry name" value="Ribosomal_uS13-like_H2TH"/>
</dbReference>
<dbReference type="InterPro" id="IPR019980">
    <property type="entry name" value="Ribosomal_uS13_bac-type"/>
</dbReference>
<dbReference type="InterPro" id="IPR018269">
    <property type="entry name" value="Ribosomal_uS13_CS"/>
</dbReference>
<dbReference type="NCBIfam" id="TIGR03631">
    <property type="entry name" value="uS13_bact"/>
    <property type="match status" value="1"/>
</dbReference>
<dbReference type="PANTHER" id="PTHR10871">
    <property type="entry name" value="30S RIBOSOMAL PROTEIN S13/40S RIBOSOMAL PROTEIN S18"/>
    <property type="match status" value="1"/>
</dbReference>
<dbReference type="PANTHER" id="PTHR10871:SF1">
    <property type="entry name" value="SMALL RIBOSOMAL SUBUNIT PROTEIN US13M"/>
    <property type="match status" value="1"/>
</dbReference>
<dbReference type="Pfam" id="PF00416">
    <property type="entry name" value="Ribosomal_S13"/>
    <property type="match status" value="1"/>
</dbReference>
<dbReference type="PIRSF" id="PIRSF002134">
    <property type="entry name" value="Ribosomal_S13"/>
    <property type="match status" value="1"/>
</dbReference>
<dbReference type="SUPFAM" id="SSF46946">
    <property type="entry name" value="S13-like H2TH domain"/>
    <property type="match status" value="1"/>
</dbReference>
<dbReference type="PROSITE" id="PS00646">
    <property type="entry name" value="RIBOSOMAL_S13_1"/>
    <property type="match status" value="1"/>
</dbReference>
<dbReference type="PROSITE" id="PS50159">
    <property type="entry name" value="RIBOSOMAL_S13_2"/>
    <property type="match status" value="1"/>
</dbReference>
<keyword id="KW-0687">Ribonucleoprotein</keyword>
<keyword id="KW-0689">Ribosomal protein</keyword>
<keyword id="KW-0694">RNA-binding</keyword>
<keyword id="KW-0699">rRNA-binding</keyword>
<keyword id="KW-0820">tRNA-binding</keyword>
<name>RS13_PSEP7</name>
<organism>
    <name type="scientific">Pseudomonas paraeruginosa (strain DSM 24068 / PA7)</name>
    <name type="common">Pseudomonas aeruginosa (strain PA7)</name>
    <dbReference type="NCBI Taxonomy" id="381754"/>
    <lineage>
        <taxon>Bacteria</taxon>
        <taxon>Pseudomonadati</taxon>
        <taxon>Pseudomonadota</taxon>
        <taxon>Gammaproteobacteria</taxon>
        <taxon>Pseudomonadales</taxon>
        <taxon>Pseudomonadaceae</taxon>
        <taxon>Pseudomonas</taxon>
        <taxon>Pseudomonas paraeruginosa</taxon>
    </lineage>
</organism>
<proteinExistence type="inferred from homology"/>
<evidence type="ECO:0000255" key="1">
    <source>
        <dbReference type="HAMAP-Rule" id="MF_01315"/>
    </source>
</evidence>
<evidence type="ECO:0000256" key="2">
    <source>
        <dbReference type="SAM" id="MobiDB-lite"/>
    </source>
</evidence>
<evidence type="ECO:0000305" key="3"/>
<reference key="1">
    <citation type="submission" date="2007-06" db="EMBL/GenBank/DDBJ databases">
        <authorList>
            <person name="Dodson R.J."/>
            <person name="Harkins D."/>
            <person name="Paulsen I.T."/>
        </authorList>
    </citation>
    <scope>NUCLEOTIDE SEQUENCE [LARGE SCALE GENOMIC DNA]</scope>
    <source>
        <strain>DSM 24068 / PA7</strain>
    </source>
</reference>
<sequence length="118" mass="13316">MARIAGVNIPDNKHTVISLTYIYGVGRTTAQNICAATGVNPAAKIKDLSDEQIDQLRNEVAKHTTEGDLRREINMNIKRLMDLGCYRGLRHRRGLPVRGQRTKTNARTRKGPRKPIRK</sequence>
<feature type="chain" id="PRO_1000051883" description="Small ribosomal subunit protein uS13">
    <location>
        <begin position="1"/>
        <end position="118"/>
    </location>
</feature>
<feature type="region of interest" description="Disordered" evidence="2">
    <location>
        <begin position="93"/>
        <end position="118"/>
    </location>
</feature>
<protein>
    <recommendedName>
        <fullName evidence="1">Small ribosomal subunit protein uS13</fullName>
    </recommendedName>
    <alternativeName>
        <fullName evidence="3">30S ribosomal protein S13</fullName>
    </alternativeName>
</protein>
<accession>A6UZL0</accession>
<comment type="function">
    <text evidence="1">Located at the top of the head of the 30S subunit, it contacts several helices of the 16S rRNA. In the 70S ribosome it contacts the 23S rRNA (bridge B1a) and protein L5 of the 50S subunit (bridge B1b), connecting the 2 subunits; these bridges are implicated in subunit movement. Contacts the tRNAs in the A and P-sites.</text>
</comment>
<comment type="subunit">
    <text evidence="1">Part of the 30S ribosomal subunit. Forms a loose heterodimer with protein S19. Forms two bridges to the 50S subunit in the 70S ribosome.</text>
</comment>
<comment type="similarity">
    <text evidence="1">Belongs to the universal ribosomal protein uS13 family.</text>
</comment>